<proteinExistence type="inferred from homology"/>
<reference key="1">
    <citation type="journal article" date="2013" name="Plant Physiol.">
        <title>A Nostoc punctiforme Sugar Transporter Necessary to Establish a Cyanobacterium-Plant Symbiosis.</title>
        <authorList>
            <person name="Ekman M."/>
            <person name="Picossi S."/>
            <person name="Campbell E.L."/>
            <person name="Meeks J.C."/>
            <person name="Flores E."/>
        </authorList>
    </citation>
    <scope>NUCLEOTIDE SEQUENCE [LARGE SCALE GENOMIC DNA]</scope>
    <source>
        <strain>ATCC 29133 / PCC 73102</strain>
    </source>
</reference>
<gene>
    <name evidence="1" type="primary">glk</name>
    <name type="ordered locus">Npun_R5075</name>
</gene>
<keyword id="KW-0067">ATP-binding</keyword>
<keyword id="KW-0963">Cytoplasm</keyword>
<keyword id="KW-0324">Glycolysis</keyword>
<keyword id="KW-0418">Kinase</keyword>
<keyword id="KW-0547">Nucleotide-binding</keyword>
<keyword id="KW-1185">Reference proteome</keyword>
<keyword id="KW-0808">Transferase</keyword>
<sequence>MTLLLAGDIGGTKTILQLVETSDSQGLHTIYQESYHSADFPDLVPIVQQFLIKANTPIPEKACFAIAGPIVKNTAKLTNLAWFLDTERLQQELGIPHIYLINDFAAVGYGISGLQKQDLHPLQVGKPQPETPIGIIGAGTGLGQGFLIKQGNNYQVFPSEGGHADFAPRNEIEFQLLKYLLDKHDIQRISVERVVSGMGIVAIYQFLRDRKFAAESPDIAQIVRTWEQEAGQEEKSVDPGAAIGTAALEKRDRLSEQTLQLFIEAYGAEAGNLALKLLPYGGLYIAGGIAPKILPLIQNSGFLLNFTQKGRMRPLLEEIPVYIILNPQVGLIGAALCAARL</sequence>
<name>GLK_NOSP7</name>
<dbReference type="EC" id="2.7.1.2" evidence="1"/>
<dbReference type="EMBL" id="CP001037">
    <property type="protein sequence ID" value="ACC83410.1"/>
    <property type="molecule type" value="Genomic_DNA"/>
</dbReference>
<dbReference type="RefSeq" id="WP_012411364.1">
    <property type="nucleotide sequence ID" value="NC_010628.1"/>
</dbReference>
<dbReference type="SMR" id="B2J224"/>
<dbReference type="STRING" id="63737.Npun_R5075"/>
<dbReference type="EnsemblBacteria" id="ACC83410">
    <property type="protein sequence ID" value="ACC83410"/>
    <property type="gene ID" value="Npun_R5075"/>
</dbReference>
<dbReference type="KEGG" id="npu:Npun_R5075"/>
<dbReference type="eggNOG" id="COG0837">
    <property type="taxonomic scope" value="Bacteria"/>
</dbReference>
<dbReference type="HOGENOM" id="CLU_042582_0_0_3"/>
<dbReference type="OrthoDB" id="9800595at2"/>
<dbReference type="PhylomeDB" id="B2J224"/>
<dbReference type="Proteomes" id="UP000001191">
    <property type="component" value="Chromosome"/>
</dbReference>
<dbReference type="GO" id="GO:0005737">
    <property type="term" value="C:cytoplasm"/>
    <property type="evidence" value="ECO:0007669"/>
    <property type="project" value="UniProtKB-SubCell"/>
</dbReference>
<dbReference type="GO" id="GO:0005524">
    <property type="term" value="F:ATP binding"/>
    <property type="evidence" value="ECO:0007669"/>
    <property type="project" value="UniProtKB-UniRule"/>
</dbReference>
<dbReference type="GO" id="GO:0005536">
    <property type="term" value="F:D-glucose binding"/>
    <property type="evidence" value="ECO:0007669"/>
    <property type="project" value="InterPro"/>
</dbReference>
<dbReference type="GO" id="GO:0004340">
    <property type="term" value="F:glucokinase activity"/>
    <property type="evidence" value="ECO:0007669"/>
    <property type="project" value="UniProtKB-UniRule"/>
</dbReference>
<dbReference type="GO" id="GO:0006096">
    <property type="term" value="P:glycolytic process"/>
    <property type="evidence" value="ECO:0007669"/>
    <property type="project" value="UniProtKB-UniRule"/>
</dbReference>
<dbReference type="CDD" id="cd24008">
    <property type="entry name" value="ASKHA_NBD_GLK"/>
    <property type="match status" value="1"/>
</dbReference>
<dbReference type="Gene3D" id="3.30.420.40">
    <property type="match status" value="1"/>
</dbReference>
<dbReference type="Gene3D" id="3.40.367.20">
    <property type="match status" value="1"/>
</dbReference>
<dbReference type="HAMAP" id="MF_00524">
    <property type="entry name" value="Glucokinase"/>
    <property type="match status" value="1"/>
</dbReference>
<dbReference type="InterPro" id="IPR043129">
    <property type="entry name" value="ATPase_NBD"/>
</dbReference>
<dbReference type="InterPro" id="IPR003836">
    <property type="entry name" value="Glucokinase"/>
</dbReference>
<dbReference type="NCBIfam" id="TIGR00749">
    <property type="entry name" value="glk"/>
    <property type="match status" value="1"/>
</dbReference>
<dbReference type="NCBIfam" id="NF001415">
    <property type="entry name" value="PRK00292.1-2"/>
    <property type="match status" value="1"/>
</dbReference>
<dbReference type="PANTHER" id="PTHR47363">
    <property type="entry name" value="GLUCOKINASE"/>
    <property type="match status" value="1"/>
</dbReference>
<dbReference type="PANTHER" id="PTHR47363:SF1">
    <property type="entry name" value="GLUCOKINASE"/>
    <property type="match status" value="1"/>
</dbReference>
<dbReference type="Pfam" id="PF02685">
    <property type="entry name" value="Glucokinase"/>
    <property type="match status" value="1"/>
</dbReference>
<dbReference type="SUPFAM" id="SSF53067">
    <property type="entry name" value="Actin-like ATPase domain"/>
    <property type="match status" value="1"/>
</dbReference>
<comment type="catalytic activity">
    <reaction evidence="1">
        <text>D-glucose + ATP = D-glucose 6-phosphate + ADP + H(+)</text>
        <dbReference type="Rhea" id="RHEA:17825"/>
        <dbReference type="ChEBI" id="CHEBI:4167"/>
        <dbReference type="ChEBI" id="CHEBI:15378"/>
        <dbReference type="ChEBI" id="CHEBI:30616"/>
        <dbReference type="ChEBI" id="CHEBI:61548"/>
        <dbReference type="ChEBI" id="CHEBI:456216"/>
        <dbReference type="EC" id="2.7.1.2"/>
    </reaction>
</comment>
<comment type="subcellular location">
    <subcellularLocation>
        <location evidence="1">Cytoplasm</location>
    </subcellularLocation>
</comment>
<comment type="similarity">
    <text evidence="1">Belongs to the bacterial glucokinase family.</text>
</comment>
<evidence type="ECO:0000255" key="1">
    <source>
        <dbReference type="HAMAP-Rule" id="MF_00524"/>
    </source>
</evidence>
<accession>B2J224</accession>
<protein>
    <recommendedName>
        <fullName evidence="1">Glucokinase</fullName>
        <ecNumber evidence="1">2.7.1.2</ecNumber>
    </recommendedName>
    <alternativeName>
        <fullName evidence="1">Glucose kinase</fullName>
    </alternativeName>
</protein>
<feature type="chain" id="PRO_1000127713" description="Glucokinase">
    <location>
        <begin position="1"/>
        <end position="341"/>
    </location>
</feature>
<feature type="binding site" evidence="1">
    <location>
        <begin position="7"/>
        <end position="12"/>
    </location>
    <ligand>
        <name>ATP</name>
        <dbReference type="ChEBI" id="CHEBI:30616"/>
    </ligand>
</feature>
<organism>
    <name type="scientific">Nostoc punctiforme (strain ATCC 29133 / PCC 73102)</name>
    <dbReference type="NCBI Taxonomy" id="63737"/>
    <lineage>
        <taxon>Bacteria</taxon>
        <taxon>Bacillati</taxon>
        <taxon>Cyanobacteriota</taxon>
        <taxon>Cyanophyceae</taxon>
        <taxon>Nostocales</taxon>
        <taxon>Nostocaceae</taxon>
        <taxon>Nostoc</taxon>
    </lineage>
</organism>